<evidence type="ECO:0000255" key="1">
    <source>
        <dbReference type="HAMAP-Rule" id="MF_01208"/>
    </source>
</evidence>
<name>PYRE_XYLFT</name>
<keyword id="KW-0328">Glycosyltransferase</keyword>
<keyword id="KW-0460">Magnesium</keyword>
<keyword id="KW-0665">Pyrimidine biosynthesis</keyword>
<keyword id="KW-1185">Reference proteome</keyword>
<keyword id="KW-0808">Transferase</keyword>
<accession>Q87F16</accession>
<sequence>MSHYRQRFLQLALDSNALCFGEFTLKSGRISPYFFNAGHFNSGAKTAALAQCYADAIDAANMNFDLVFGPAYKGIPLATALACEYAQRERDLLLTFNRKEVKNHGEGGTLIGAPLNGRKILIIDDVITAGTAIREVLRIIRNAGGTPTGVAVALNRQEIASETNRQSSVQALMAETGIPVVAIATLNDLLAFVEENASLAKFYEPLLAYKTHYGTEAPD</sequence>
<protein>
    <recommendedName>
        <fullName evidence="1">Orotate phosphoribosyltransferase</fullName>
        <shortName evidence="1">OPRT</shortName>
        <shortName evidence="1">OPRTase</shortName>
        <ecNumber evidence="1">2.4.2.10</ecNumber>
    </recommendedName>
</protein>
<dbReference type="EC" id="2.4.2.10" evidence="1"/>
<dbReference type="EMBL" id="AE009442">
    <property type="protein sequence ID" value="AAO28021.1"/>
    <property type="molecule type" value="Genomic_DNA"/>
</dbReference>
<dbReference type="RefSeq" id="WP_004087761.1">
    <property type="nucleotide sequence ID" value="NC_004556.1"/>
</dbReference>
<dbReference type="SMR" id="Q87F16"/>
<dbReference type="GeneID" id="93903813"/>
<dbReference type="KEGG" id="xft:PD_0122"/>
<dbReference type="HOGENOM" id="CLU_074878_0_1_6"/>
<dbReference type="UniPathway" id="UPA00070">
    <property type="reaction ID" value="UER00119"/>
</dbReference>
<dbReference type="Proteomes" id="UP000002516">
    <property type="component" value="Chromosome"/>
</dbReference>
<dbReference type="GO" id="GO:0005737">
    <property type="term" value="C:cytoplasm"/>
    <property type="evidence" value="ECO:0007669"/>
    <property type="project" value="TreeGrafter"/>
</dbReference>
<dbReference type="GO" id="GO:0000287">
    <property type="term" value="F:magnesium ion binding"/>
    <property type="evidence" value="ECO:0007669"/>
    <property type="project" value="UniProtKB-UniRule"/>
</dbReference>
<dbReference type="GO" id="GO:0004588">
    <property type="term" value="F:orotate phosphoribosyltransferase activity"/>
    <property type="evidence" value="ECO:0007669"/>
    <property type="project" value="UniProtKB-UniRule"/>
</dbReference>
<dbReference type="GO" id="GO:0006207">
    <property type="term" value="P:'de novo' pyrimidine nucleobase biosynthetic process"/>
    <property type="evidence" value="ECO:0007669"/>
    <property type="project" value="TreeGrafter"/>
</dbReference>
<dbReference type="GO" id="GO:0044205">
    <property type="term" value="P:'de novo' UMP biosynthetic process"/>
    <property type="evidence" value="ECO:0007669"/>
    <property type="project" value="UniProtKB-UniRule"/>
</dbReference>
<dbReference type="GO" id="GO:0046132">
    <property type="term" value="P:pyrimidine ribonucleoside biosynthetic process"/>
    <property type="evidence" value="ECO:0007669"/>
    <property type="project" value="TreeGrafter"/>
</dbReference>
<dbReference type="CDD" id="cd06223">
    <property type="entry name" value="PRTases_typeI"/>
    <property type="match status" value="1"/>
</dbReference>
<dbReference type="FunFam" id="3.40.50.2020:FF:000052">
    <property type="entry name" value="Orotate phosphoribosyltransferase"/>
    <property type="match status" value="1"/>
</dbReference>
<dbReference type="Gene3D" id="3.40.50.2020">
    <property type="match status" value="1"/>
</dbReference>
<dbReference type="HAMAP" id="MF_01208">
    <property type="entry name" value="PyrE"/>
    <property type="match status" value="1"/>
</dbReference>
<dbReference type="InterPro" id="IPR023031">
    <property type="entry name" value="OPRT"/>
</dbReference>
<dbReference type="InterPro" id="IPR004467">
    <property type="entry name" value="Or_phspho_trans_dom"/>
</dbReference>
<dbReference type="InterPro" id="IPR000836">
    <property type="entry name" value="PRibTrfase_dom"/>
</dbReference>
<dbReference type="InterPro" id="IPR029057">
    <property type="entry name" value="PRTase-like"/>
</dbReference>
<dbReference type="NCBIfam" id="TIGR00336">
    <property type="entry name" value="pyrE"/>
    <property type="match status" value="1"/>
</dbReference>
<dbReference type="PANTHER" id="PTHR46683">
    <property type="entry name" value="OROTATE PHOSPHORIBOSYLTRANSFERASE 1-RELATED"/>
    <property type="match status" value="1"/>
</dbReference>
<dbReference type="PANTHER" id="PTHR46683:SF1">
    <property type="entry name" value="OROTATE PHOSPHORIBOSYLTRANSFERASE 1-RELATED"/>
    <property type="match status" value="1"/>
</dbReference>
<dbReference type="Pfam" id="PF00156">
    <property type="entry name" value="Pribosyltran"/>
    <property type="match status" value="1"/>
</dbReference>
<dbReference type="SUPFAM" id="SSF53271">
    <property type="entry name" value="PRTase-like"/>
    <property type="match status" value="1"/>
</dbReference>
<dbReference type="PROSITE" id="PS00103">
    <property type="entry name" value="PUR_PYR_PR_TRANSFER"/>
    <property type="match status" value="1"/>
</dbReference>
<comment type="function">
    <text evidence="1">Catalyzes the transfer of a ribosyl phosphate group from 5-phosphoribose 1-diphosphate to orotate, leading to the formation of orotidine monophosphate (OMP).</text>
</comment>
<comment type="catalytic activity">
    <reaction evidence="1">
        <text>orotidine 5'-phosphate + diphosphate = orotate + 5-phospho-alpha-D-ribose 1-diphosphate</text>
        <dbReference type="Rhea" id="RHEA:10380"/>
        <dbReference type="ChEBI" id="CHEBI:30839"/>
        <dbReference type="ChEBI" id="CHEBI:33019"/>
        <dbReference type="ChEBI" id="CHEBI:57538"/>
        <dbReference type="ChEBI" id="CHEBI:58017"/>
        <dbReference type="EC" id="2.4.2.10"/>
    </reaction>
</comment>
<comment type="cofactor">
    <cofactor evidence="1">
        <name>Mg(2+)</name>
        <dbReference type="ChEBI" id="CHEBI:18420"/>
    </cofactor>
</comment>
<comment type="pathway">
    <text evidence="1">Pyrimidine metabolism; UMP biosynthesis via de novo pathway; UMP from orotate: step 1/2.</text>
</comment>
<comment type="subunit">
    <text evidence="1">Homodimer.</text>
</comment>
<comment type="similarity">
    <text evidence="1">Belongs to the purine/pyrimidine phosphoribosyltransferase family. PyrE subfamily.</text>
</comment>
<gene>
    <name evidence="1" type="primary">pyrE</name>
    <name type="ordered locus">PD_0122</name>
</gene>
<feature type="chain" id="PRO_0000110773" description="Orotate phosphoribosyltransferase">
    <location>
        <begin position="1"/>
        <end position="219"/>
    </location>
</feature>
<feature type="binding site" description="in other chain" evidence="1">
    <location>
        <position position="26"/>
    </location>
    <ligand>
        <name>5-phospho-alpha-D-ribose 1-diphosphate</name>
        <dbReference type="ChEBI" id="CHEBI:58017"/>
        <note>ligand shared between dimeric partners</note>
    </ligand>
</feature>
<feature type="binding site" evidence="1">
    <location>
        <begin position="34"/>
        <end position="35"/>
    </location>
    <ligand>
        <name>orotate</name>
        <dbReference type="ChEBI" id="CHEBI:30839"/>
    </ligand>
</feature>
<feature type="binding site" description="in other chain" evidence="1">
    <location>
        <begin position="72"/>
        <end position="73"/>
    </location>
    <ligand>
        <name>5-phospho-alpha-D-ribose 1-diphosphate</name>
        <dbReference type="ChEBI" id="CHEBI:58017"/>
        <note>ligand shared between dimeric partners</note>
    </ligand>
</feature>
<feature type="binding site" evidence="1">
    <location>
        <position position="98"/>
    </location>
    <ligand>
        <name>5-phospho-alpha-D-ribose 1-diphosphate</name>
        <dbReference type="ChEBI" id="CHEBI:58017"/>
        <note>ligand shared between dimeric partners</note>
    </ligand>
</feature>
<feature type="binding site" description="in other chain" evidence="1">
    <location>
        <position position="99"/>
    </location>
    <ligand>
        <name>5-phospho-alpha-D-ribose 1-diphosphate</name>
        <dbReference type="ChEBI" id="CHEBI:58017"/>
        <note>ligand shared between dimeric partners</note>
    </ligand>
</feature>
<feature type="binding site" evidence="1">
    <location>
        <position position="102"/>
    </location>
    <ligand>
        <name>5-phospho-alpha-D-ribose 1-diphosphate</name>
        <dbReference type="ChEBI" id="CHEBI:58017"/>
        <note>ligand shared between dimeric partners</note>
    </ligand>
</feature>
<feature type="binding site" evidence="1">
    <location>
        <position position="104"/>
    </location>
    <ligand>
        <name>5-phospho-alpha-D-ribose 1-diphosphate</name>
        <dbReference type="ChEBI" id="CHEBI:58017"/>
        <note>ligand shared between dimeric partners</note>
    </ligand>
</feature>
<feature type="binding site" description="in other chain" evidence="1">
    <location>
        <begin position="124"/>
        <end position="132"/>
    </location>
    <ligand>
        <name>5-phospho-alpha-D-ribose 1-diphosphate</name>
        <dbReference type="ChEBI" id="CHEBI:58017"/>
        <note>ligand shared between dimeric partners</note>
    </ligand>
</feature>
<feature type="binding site" evidence="1">
    <location>
        <position position="128"/>
    </location>
    <ligand>
        <name>orotate</name>
        <dbReference type="ChEBI" id="CHEBI:30839"/>
    </ligand>
</feature>
<feature type="binding site" evidence="1">
    <location>
        <position position="156"/>
    </location>
    <ligand>
        <name>orotate</name>
        <dbReference type="ChEBI" id="CHEBI:30839"/>
    </ligand>
</feature>
<reference key="1">
    <citation type="journal article" date="2003" name="J. Bacteriol.">
        <title>Comparative analyses of the complete genome sequences of Pierce's disease and citrus variegated chlorosis strains of Xylella fastidiosa.</title>
        <authorList>
            <person name="Van Sluys M.A."/>
            <person name="de Oliveira M.C."/>
            <person name="Monteiro-Vitorello C.B."/>
            <person name="Miyaki C.Y."/>
            <person name="Furlan L.R."/>
            <person name="Camargo L.E.A."/>
            <person name="da Silva A.C.R."/>
            <person name="Moon D.H."/>
            <person name="Takita M.A."/>
            <person name="Lemos E.G.M."/>
            <person name="Machado M.A."/>
            <person name="Ferro M.I.T."/>
            <person name="da Silva F.R."/>
            <person name="Goldman M.H.S."/>
            <person name="Goldman G.H."/>
            <person name="Lemos M.V.F."/>
            <person name="El-Dorry H."/>
            <person name="Tsai S.M."/>
            <person name="Carrer H."/>
            <person name="Carraro D.M."/>
            <person name="de Oliveira R.C."/>
            <person name="Nunes L.R."/>
            <person name="Siqueira W.J."/>
            <person name="Coutinho L.L."/>
            <person name="Kimura E.T."/>
            <person name="Ferro E.S."/>
            <person name="Harakava R."/>
            <person name="Kuramae E.E."/>
            <person name="Marino C.L."/>
            <person name="Giglioti E."/>
            <person name="Abreu I.L."/>
            <person name="Alves L.M.C."/>
            <person name="do Amaral A.M."/>
            <person name="Baia G.S."/>
            <person name="Blanco S.R."/>
            <person name="Brito M.S."/>
            <person name="Cannavan F.S."/>
            <person name="Celestino A.V."/>
            <person name="da Cunha A.F."/>
            <person name="Fenille R.C."/>
            <person name="Ferro J.A."/>
            <person name="Formighieri E.F."/>
            <person name="Kishi L.T."/>
            <person name="Leoni S.G."/>
            <person name="Oliveira A.R."/>
            <person name="Rosa V.E. Jr."/>
            <person name="Sassaki F.T."/>
            <person name="Sena J.A.D."/>
            <person name="de Souza A.A."/>
            <person name="Truffi D."/>
            <person name="Tsukumo F."/>
            <person name="Yanai G.M."/>
            <person name="Zaros L.G."/>
            <person name="Civerolo E.L."/>
            <person name="Simpson A.J.G."/>
            <person name="Almeida N.F. Jr."/>
            <person name="Setubal J.C."/>
            <person name="Kitajima J.P."/>
        </authorList>
    </citation>
    <scope>NUCLEOTIDE SEQUENCE [LARGE SCALE GENOMIC DNA]</scope>
    <source>
        <strain>Temecula1 / ATCC 700964</strain>
    </source>
</reference>
<organism>
    <name type="scientific">Xylella fastidiosa (strain Temecula1 / ATCC 700964)</name>
    <dbReference type="NCBI Taxonomy" id="183190"/>
    <lineage>
        <taxon>Bacteria</taxon>
        <taxon>Pseudomonadati</taxon>
        <taxon>Pseudomonadota</taxon>
        <taxon>Gammaproteobacteria</taxon>
        <taxon>Lysobacterales</taxon>
        <taxon>Lysobacteraceae</taxon>
        <taxon>Xylella</taxon>
    </lineage>
</organism>
<proteinExistence type="inferred from homology"/>